<comment type="function">
    <text evidence="1">Part of a complex that catalyzes the formation of methyl-coenzyme M and tetrahydromethanopterin from coenzyme M and methyl-tetrahydromethanopterin. This is an energy-conserving, sodium-ion translocating step.</text>
</comment>
<comment type="catalytic activity">
    <reaction evidence="1">
        <text>5-methyl-5,6,7,8-tetrahydromethanopterin + coenzyme M + 2 Na(+)(in) = 5,6,7,8-tetrahydromethanopterin + methyl-coenzyme M + 2 Na(+)(out)</text>
        <dbReference type="Rhea" id="RHEA:53492"/>
        <dbReference type="ChEBI" id="CHEBI:29101"/>
        <dbReference type="ChEBI" id="CHEBI:58103"/>
        <dbReference type="ChEBI" id="CHEBI:58116"/>
        <dbReference type="ChEBI" id="CHEBI:58286"/>
        <dbReference type="ChEBI" id="CHEBI:58319"/>
        <dbReference type="EC" id="7.2.1.4"/>
    </reaction>
</comment>
<comment type="cofactor">
    <cofactor evidence="1">
        <name>5-hydroxybenzimidazolylcob(I)amide</name>
        <dbReference type="ChEBI" id="CHEBI:60494"/>
    </cofactor>
    <text evidence="1">Binds 1 5-hydroxybenzimidazolylcobamide group.</text>
</comment>
<comment type="pathway">
    <text evidence="1">One-carbon metabolism; methanogenesis from CO(2); methyl-coenzyme M from 5,10-methylene-5,6,7,8-tetrahydromethanopterin: step 2/2.</text>
</comment>
<comment type="subunit">
    <text evidence="1">The complex is composed of 8 subunits; MtrA, MtrB, MtrC, MtrD, MtrE, MtrF, MtrG and MtrH.</text>
</comment>
<comment type="subcellular location">
    <subcellularLocation>
        <location evidence="1">Cell membrane</location>
        <topology evidence="1">Single-pass membrane protein</topology>
    </subcellularLocation>
</comment>
<comment type="similarity">
    <text evidence="1">Belongs to the MtrA family.</text>
</comment>
<protein>
    <recommendedName>
        <fullName evidence="1">Tetrahydromethanopterin S-methyltransferase subunit A</fullName>
        <ecNumber evidence="1">7.2.1.4</ecNumber>
    </recommendedName>
    <alternativeName>
        <fullName evidence="1">N5-methyltetrahydromethanopterin--coenzyme M methyltransferase subunit A</fullName>
    </alternativeName>
</protein>
<sequence length="240" mass="25342">MVDKKEPASGWPILKGEYEVGDVKGCVAVITCASHLPGKPVLDAGAAITGSCKTENLGIEKVVAHVISNPNIRYLVVTGAEVKGHVTGQAMLSIHANGVKEHRIVGAVGAIPYVENLNDDAVARFQQQIETVNLLDTEDMGAITAKVRELVAKDPGAFDAEPMVVEISEEGEEEEEGGVVRPVSGEIAVIRSRLKAIEARMLDIGNLNKFHSGVHAGKIEGAMIGLTVTISLLGLLLLGR</sequence>
<gene>
    <name evidence="1" type="primary">mtrA</name>
    <name type="ordered locus">MA_0272</name>
</gene>
<accession>Q8TU03</accession>
<dbReference type="EC" id="7.2.1.4" evidence="1"/>
<dbReference type="EMBL" id="AE010299">
    <property type="protein sequence ID" value="AAM03725.1"/>
    <property type="molecule type" value="Genomic_DNA"/>
</dbReference>
<dbReference type="RefSeq" id="WP_011020330.1">
    <property type="nucleotide sequence ID" value="NC_003552.1"/>
</dbReference>
<dbReference type="SMR" id="Q8TU03"/>
<dbReference type="FunCoup" id="Q8TU03">
    <property type="interactions" value="74"/>
</dbReference>
<dbReference type="STRING" id="188937.MA_0272"/>
<dbReference type="EnsemblBacteria" id="AAM03725">
    <property type="protein sequence ID" value="AAM03725"/>
    <property type="gene ID" value="MA_0272"/>
</dbReference>
<dbReference type="GeneID" id="1472164"/>
<dbReference type="KEGG" id="mac:MA_0272"/>
<dbReference type="HOGENOM" id="CLU_100863_0_0_2"/>
<dbReference type="InParanoid" id="Q8TU03"/>
<dbReference type="OrthoDB" id="130682at2157"/>
<dbReference type="PhylomeDB" id="Q8TU03"/>
<dbReference type="UniPathway" id="UPA00640">
    <property type="reaction ID" value="UER00698"/>
</dbReference>
<dbReference type="Proteomes" id="UP000002487">
    <property type="component" value="Chromosome"/>
</dbReference>
<dbReference type="GO" id="GO:0005886">
    <property type="term" value="C:plasma membrane"/>
    <property type="evidence" value="ECO:0007669"/>
    <property type="project" value="UniProtKB-SubCell"/>
</dbReference>
<dbReference type="GO" id="GO:0050897">
    <property type="term" value="F:cobalt ion binding"/>
    <property type="evidence" value="ECO:0007669"/>
    <property type="project" value="InterPro"/>
</dbReference>
<dbReference type="GO" id="GO:0030269">
    <property type="term" value="F:tetrahydromethanopterin S-methyltransferase activity"/>
    <property type="evidence" value="ECO:0007669"/>
    <property type="project" value="UniProtKB-UniRule"/>
</dbReference>
<dbReference type="GO" id="GO:0019386">
    <property type="term" value="P:methanogenesis, from carbon dioxide"/>
    <property type="evidence" value="ECO:0007669"/>
    <property type="project" value="UniProtKB-UniRule"/>
</dbReference>
<dbReference type="GO" id="GO:0032259">
    <property type="term" value="P:methylation"/>
    <property type="evidence" value="ECO:0007669"/>
    <property type="project" value="UniProtKB-KW"/>
</dbReference>
<dbReference type="GO" id="GO:0006730">
    <property type="term" value="P:one-carbon metabolic process"/>
    <property type="evidence" value="ECO:0007669"/>
    <property type="project" value="UniProtKB-UniRule"/>
</dbReference>
<dbReference type="HAMAP" id="MF_01093">
    <property type="entry name" value="MtrA"/>
    <property type="match status" value="1"/>
</dbReference>
<dbReference type="InterPro" id="IPR030688">
    <property type="entry name" value="MeTrfase_MtrA/MtxA"/>
</dbReference>
<dbReference type="InterPro" id="IPR005778">
    <property type="entry name" value="MtrA"/>
</dbReference>
<dbReference type="NCBIfam" id="TIGR01111">
    <property type="entry name" value="mtrA"/>
    <property type="match status" value="1"/>
</dbReference>
<dbReference type="NCBIfam" id="NF002126">
    <property type="entry name" value="PRK00964.1-4"/>
    <property type="match status" value="1"/>
</dbReference>
<dbReference type="Pfam" id="PF04208">
    <property type="entry name" value="MtrA"/>
    <property type="match status" value="1"/>
</dbReference>
<dbReference type="PIRSF" id="PIRSF500207">
    <property type="entry name" value="MtrA"/>
    <property type="match status" value="1"/>
</dbReference>
<dbReference type="PIRSF" id="PIRSF009452">
    <property type="entry name" value="MtrA_MtxA"/>
    <property type="match status" value="1"/>
</dbReference>
<feature type="chain" id="PRO_0000147501" description="Tetrahydromethanopterin S-methyltransferase subunit A">
    <location>
        <begin position="1"/>
        <end position="240"/>
    </location>
</feature>
<feature type="topological domain" description="Cytoplasmic" evidence="1">
    <location>
        <begin position="1"/>
        <end position="218"/>
    </location>
</feature>
<feature type="transmembrane region" description="Helical" evidence="1">
    <location>
        <begin position="219"/>
        <end position="239"/>
    </location>
</feature>
<feature type="topological domain" description="Extracellular" evidence="1">
    <location>
        <position position="240"/>
    </location>
</feature>
<feature type="binding site" evidence="1">
    <location>
        <position position="85"/>
    </location>
    <ligand>
        <name>5-hydroxybenzimidazolylcob(I)amide</name>
        <dbReference type="ChEBI" id="CHEBI:60494"/>
        <note>cofactor</note>
    </ligand>
</feature>
<evidence type="ECO:0000255" key="1">
    <source>
        <dbReference type="HAMAP-Rule" id="MF_01093"/>
    </source>
</evidence>
<organism>
    <name type="scientific">Methanosarcina acetivorans (strain ATCC 35395 / DSM 2834 / JCM 12185 / C2A)</name>
    <dbReference type="NCBI Taxonomy" id="188937"/>
    <lineage>
        <taxon>Archaea</taxon>
        <taxon>Methanobacteriati</taxon>
        <taxon>Methanobacteriota</taxon>
        <taxon>Stenosarchaea group</taxon>
        <taxon>Methanomicrobia</taxon>
        <taxon>Methanosarcinales</taxon>
        <taxon>Methanosarcinaceae</taxon>
        <taxon>Methanosarcina</taxon>
    </lineage>
</organism>
<name>MTRA_METAC</name>
<keyword id="KW-1003">Cell membrane</keyword>
<keyword id="KW-0170">Cobalt</keyword>
<keyword id="KW-0472">Membrane</keyword>
<keyword id="KW-0484">Methanogenesis</keyword>
<keyword id="KW-0489">Methyltransferase</keyword>
<keyword id="KW-0554">One-carbon metabolism</keyword>
<keyword id="KW-1185">Reference proteome</keyword>
<keyword id="KW-0808">Transferase</keyword>
<keyword id="KW-1278">Translocase</keyword>
<keyword id="KW-0812">Transmembrane</keyword>
<keyword id="KW-1133">Transmembrane helix</keyword>
<proteinExistence type="inferred from homology"/>
<reference key="1">
    <citation type="journal article" date="2002" name="Genome Res.">
        <title>The genome of Methanosarcina acetivorans reveals extensive metabolic and physiological diversity.</title>
        <authorList>
            <person name="Galagan J.E."/>
            <person name="Nusbaum C."/>
            <person name="Roy A."/>
            <person name="Endrizzi M.G."/>
            <person name="Macdonald P."/>
            <person name="FitzHugh W."/>
            <person name="Calvo S."/>
            <person name="Engels R."/>
            <person name="Smirnov S."/>
            <person name="Atnoor D."/>
            <person name="Brown A."/>
            <person name="Allen N."/>
            <person name="Naylor J."/>
            <person name="Stange-Thomann N."/>
            <person name="DeArellano K."/>
            <person name="Johnson R."/>
            <person name="Linton L."/>
            <person name="McEwan P."/>
            <person name="McKernan K."/>
            <person name="Talamas J."/>
            <person name="Tirrell A."/>
            <person name="Ye W."/>
            <person name="Zimmer A."/>
            <person name="Barber R.D."/>
            <person name="Cann I."/>
            <person name="Graham D.E."/>
            <person name="Grahame D.A."/>
            <person name="Guss A.M."/>
            <person name="Hedderich R."/>
            <person name="Ingram-Smith C."/>
            <person name="Kuettner H.C."/>
            <person name="Krzycki J.A."/>
            <person name="Leigh J.A."/>
            <person name="Li W."/>
            <person name="Liu J."/>
            <person name="Mukhopadhyay B."/>
            <person name="Reeve J.N."/>
            <person name="Smith K."/>
            <person name="Springer T.A."/>
            <person name="Umayam L.A."/>
            <person name="White O."/>
            <person name="White R.H."/>
            <person name="de Macario E.C."/>
            <person name="Ferry J.G."/>
            <person name="Jarrell K.F."/>
            <person name="Jing H."/>
            <person name="Macario A.J.L."/>
            <person name="Paulsen I.T."/>
            <person name="Pritchett M."/>
            <person name="Sowers K.R."/>
            <person name="Swanson R.V."/>
            <person name="Zinder S.H."/>
            <person name="Lander E."/>
            <person name="Metcalf W.W."/>
            <person name="Birren B."/>
        </authorList>
    </citation>
    <scope>NUCLEOTIDE SEQUENCE [LARGE SCALE GENOMIC DNA]</scope>
    <source>
        <strain>ATCC 35395 / DSM 2834 / JCM 12185 / C2A</strain>
    </source>
</reference>